<proteinExistence type="inferred from homology"/>
<accession>A8FMY0</accession>
<evidence type="ECO:0000255" key="1">
    <source>
        <dbReference type="HAMAP-Rule" id="MF_01220"/>
    </source>
</evidence>
<reference key="1">
    <citation type="journal article" date="2007" name="J. Bacteriol.">
        <title>The complete genome sequence of Campylobacter jejuni strain 81116 (NCTC11828).</title>
        <authorList>
            <person name="Pearson B.M."/>
            <person name="Gaskin D.J.H."/>
            <person name="Segers R.P.A.M."/>
            <person name="Wells J.M."/>
            <person name="Nuijten P.J.M."/>
            <person name="van Vliet A.H.M."/>
        </authorList>
    </citation>
    <scope>NUCLEOTIDE SEQUENCE [LARGE SCALE GENOMIC DNA]</scope>
    <source>
        <strain>81116 / NCTC 11828</strain>
    </source>
</reference>
<organism>
    <name type="scientific">Campylobacter jejuni subsp. jejuni serotype O:6 (strain 81116 / NCTC 11828)</name>
    <dbReference type="NCBI Taxonomy" id="407148"/>
    <lineage>
        <taxon>Bacteria</taxon>
        <taxon>Pseudomonadati</taxon>
        <taxon>Campylobacterota</taxon>
        <taxon>Epsilonproteobacteria</taxon>
        <taxon>Campylobacterales</taxon>
        <taxon>Campylobacteraceae</taxon>
        <taxon>Campylobacter</taxon>
    </lineage>
</organism>
<comment type="function">
    <text evidence="1">Catalyzes the reversible phosphorylation of UMP to UDP.</text>
</comment>
<comment type="catalytic activity">
    <reaction evidence="1">
        <text>UMP + ATP = UDP + ADP</text>
        <dbReference type="Rhea" id="RHEA:24400"/>
        <dbReference type="ChEBI" id="CHEBI:30616"/>
        <dbReference type="ChEBI" id="CHEBI:57865"/>
        <dbReference type="ChEBI" id="CHEBI:58223"/>
        <dbReference type="ChEBI" id="CHEBI:456216"/>
        <dbReference type="EC" id="2.7.4.22"/>
    </reaction>
</comment>
<comment type="activity regulation">
    <text evidence="1">Allosterically activated by GTP. Inhibited by UTP.</text>
</comment>
<comment type="pathway">
    <text evidence="1">Pyrimidine metabolism; CTP biosynthesis via de novo pathway; UDP from UMP (UMPK route): step 1/1.</text>
</comment>
<comment type="subunit">
    <text evidence="1">Homohexamer.</text>
</comment>
<comment type="subcellular location">
    <subcellularLocation>
        <location evidence="1">Cytoplasm</location>
    </subcellularLocation>
</comment>
<comment type="similarity">
    <text evidence="1">Belongs to the UMP kinase family.</text>
</comment>
<dbReference type="EC" id="2.7.4.22" evidence="1"/>
<dbReference type="EMBL" id="CP000814">
    <property type="protein sequence ID" value="ABV52817.1"/>
    <property type="molecule type" value="Genomic_DNA"/>
</dbReference>
<dbReference type="RefSeq" id="WP_002854049.1">
    <property type="nucleotide sequence ID" value="NC_009839.1"/>
</dbReference>
<dbReference type="SMR" id="A8FMY0"/>
<dbReference type="KEGG" id="cju:C8J_1218"/>
<dbReference type="HOGENOM" id="CLU_033861_0_0_7"/>
<dbReference type="UniPathway" id="UPA00159">
    <property type="reaction ID" value="UER00275"/>
</dbReference>
<dbReference type="GO" id="GO:0005829">
    <property type="term" value="C:cytosol"/>
    <property type="evidence" value="ECO:0007669"/>
    <property type="project" value="TreeGrafter"/>
</dbReference>
<dbReference type="GO" id="GO:0005524">
    <property type="term" value="F:ATP binding"/>
    <property type="evidence" value="ECO:0007669"/>
    <property type="project" value="UniProtKB-KW"/>
</dbReference>
<dbReference type="GO" id="GO:0033862">
    <property type="term" value="F:UMP kinase activity"/>
    <property type="evidence" value="ECO:0007669"/>
    <property type="project" value="UniProtKB-EC"/>
</dbReference>
<dbReference type="GO" id="GO:0044210">
    <property type="term" value="P:'de novo' CTP biosynthetic process"/>
    <property type="evidence" value="ECO:0007669"/>
    <property type="project" value="UniProtKB-UniRule"/>
</dbReference>
<dbReference type="GO" id="GO:0006225">
    <property type="term" value="P:UDP biosynthetic process"/>
    <property type="evidence" value="ECO:0007669"/>
    <property type="project" value="TreeGrafter"/>
</dbReference>
<dbReference type="CDD" id="cd04254">
    <property type="entry name" value="AAK_UMPK-PyrH-Ec"/>
    <property type="match status" value="1"/>
</dbReference>
<dbReference type="FunFam" id="3.40.1160.10:FF:000001">
    <property type="entry name" value="Uridylate kinase"/>
    <property type="match status" value="1"/>
</dbReference>
<dbReference type="Gene3D" id="3.40.1160.10">
    <property type="entry name" value="Acetylglutamate kinase-like"/>
    <property type="match status" value="1"/>
</dbReference>
<dbReference type="HAMAP" id="MF_01220_B">
    <property type="entry name" value="PyrH_B"/>
    <property type="match status" value="1"/>
</dbReference>
<dbReference type="InterPro" id="IPR036393">
    <property type="entry name" value="AceGlu_kinase-like_sf"/>
</dbReference>
<dbReference type="InterPro" id="IPR001048">
    <property type="entry name" value="Asp/Glu/Uridylate_kinase"/>
</dbReference>
<dbReference type="InterPro" id="IPR011817">
    <property type="entry name" value="Uridylate_kinase"/>
</dbReference>
<dbReference type="InterPro" id="IPR015963">
    <property type="entry name" value="Uridylate_kinase_bac"/>
</dbReference>
<dbReference type="NCBIfam" id="TIGR02075">
    <property type="entry name" value="pyrH_bact"/>
    <property type="match status" value="1"/>
</dbReference>
<dbReference type="PANTHER" id="PTHR42833">
    <property type="entry name" value="URIDYLATE KINASE"/>
    <property type="match status" value="1"/>
</dbReference>
<dbReference type="PANTHER" id="PTHR42833:SF4">
    <property type="entry name" value="URIDYLATE KINASE PUMPKIN, CHLOROPLASTIC"/>
    <property type="match status" value="1"/>
</dbReference>
<dbReference type="Pfam" id="PF00696">
    <property type="entry name" value="AA_kinase"/>
    <property type="match status" value="1"/>
</dbReference>
<dbReference type="PIRSF" id="PIRSF005650">
    <property type="entry name" value="Uridylate_kin"/>
    <property type="match status" value="1"/>
</dbReference>
<dbReference type="SUPFAM" id="SSF53633">
    <property type="entry name" value="Carbamate kinase-like"/>
    <property type="match status" value="1"/>
</dbReference>
<feature type="chain" id="PRO_1000073138" description="Uridylate kinase">
    <location>
        <begin position="1"/>
        <end position="239"/>
    </location>
</feature>
<feature type="region of interest" description="Involved in allosteric activation by GTP" evidence="1">
    <location>
        <begin position="18"/>
        <end position="23"/>
    </location>
</feature>
<feature type="binding site" evidence="1">
    <location>
        <begin position="10"/>
        <end position="13"/>
    </location>
    <ligand>
        <name>ATP</name>
        <dbReference type="ChEBI" id="CHEBI:30616"/>
    </ligand>
</feature>
<feature type="binding site" evidence="1">
    <location>
        <position position="52"/>
    </location>
    <ligand>
        <name>UMP</name>
        <dbReference type="ChEBI" id="CHEBI:57865"/>
    </ligand>
</feature>
<feature type="binding site" evidence="1">
    <location>
        <position position="53"/>
    </location>
    <ligand>
        <name>ATP</name>
        <dbReference type="ChEBI" id="CHEBI:30616"/>
    </ligand>
</feature>
<feature type="binding site" evidence="1">
    <location>
        <position position="57"/>
    </location>
    <ligand>
        <name>ATP</name>
        <dbReference type="ChEBI" id="CHEBI:30616"/>
    </ligand>
</feature>
<feature type="binding site" evidence="1">
    <location>
        <position position="73"/>
    </location>
    <ligand>
        <name>UMP</name>
        <dbReference type="ChEBI" id="CHEBI:57865"/>
    </ligand>
</feature>
<feature type="binding site" evidence="1">
    <location>
        <begin position="134"/>
        <end position="141"/>
    </location>
    <ligand>
        <name>UMP</name>
        <dbReference type="ChEBI" id="CHEBI:57865"/>
    </ligand>
</feature>
<feature type="binding site" evidence="1">
    <location>
        <position position="161"/>
    </location>
    <ligand>
        <name>ATP</name>
        <dbReference type="ChEBI" id="CHEBI:30616"/>
    </ligand>
</feature>
<feature type="binding site" evidence="1">
    <location>
        <position position="167"/>
    </location>
    <ligand>
        <name>ATP</name>
        <dbReference type="ChEBI" id="CHEBI:30616"/>
    </ligand>
</feature>
<feature type="binding site" evidence="1">
    <location>
        <position position="170"/>
    </location>
    <ligand>
        <name>ATP</name>
        <dbReference type="ChEBI" id="CHEBI:30616"/>
    </ligand>
</feature>
<name>PYRH_CAMJ8</name>
<protein>
    <recommendedName>
        <fullName evidence="1">Uridylate kinase</fullName>
        <shortName evidence="1">UK</shortName>
        <ecNumber evidence="1">2.7.4.22</ecNumber>
    </recommendedName>
    <alternativeName>
        <fullName evidence="1">Uridine monophosphate kinase</fullName>
        <shortName evidence="1">UMP kinase</shortName>
        <shortName evidence="1">UMPK</shortName>
    </alternativeName>
</protein>
<sequence length="239" mass="26031">MQERKRVLVKFSGEALAGENGFGIENSILKFIASEIKELIKNQIEVGIVIGGGNIIRGVSAAKGGLIKRTSGDHMGMLATVINAIAIQEALESSGLEVRVQSAIQMEAFCETYIMRRAQRHLEKGRVVVFAAGTGNPYFTTDTTAILRAVEIDADMVIKATKVNGVYDKDPKQFDDAVFLNTLSYDEAMQDNIKVMDDTAIALAKDNKLPIVVCNMFEEGNLLKIIQGDTSLCSIVKNN</sequence>
<keyword id="KW-0021">Allosteric enzyme</keyword>
<keyword id="KW-0067">ATP-binding</keyword>
<keyword id="KW-0963">Cytoplasm</keyword>
<keyword id="KW-0418">Kinase</keyword>
<keyword id="KW-0547">Nucleotide-binding</keyword>
<keyword id="KW-0665">Pyrimidine biosynthesis</keyword>
<keyword id="KW-0808">Transferase</keyword>
<gene>
    <name evidence="1" type="primary">pyrH</name>
    <name type="ordered locus">C8J_1218</name>
</gene>